<sequence>MQEKEASPHGFLPRFQHFATQAIHVGQEPEQWTSQAVVPPISLSTTFKQGAPGQHSGFEYSRSGNPTRNCLEKAVAALDGAKYSLAFASGLAATVTITHLLKAGDQIICMDDVYGGTNRYFRQVATEFGLKISFVDCSKPKLLEAAITPETKLVWIETPTNPSLKMIDIEACAHTVHKHGDIILVVDNTFMSAYFQRPLSLGADICMYSATKYMNGYSDVVMGLVSLNSESLHDRLRFLQNSLGAVPSPIDCYLCNRGLKTLQVRMEKHFENGMAVAQFLESNPQVEKVIYPGLPSHPQHELAKRQCTGCPGMVTFYIKGSLQHAETFLQNLKLFTLAESLGGYESLAELPAIMTHASVPKSDREVLGISDTLIRLSVGLEDKQDLLDDLDQALKAANPPNASSN</sequence>
<reference key="1">
    <citation type="journal article" date="2005" name="BMC Genomics">
        <title>Characterization of 954 bovine full-CDS cDNA sequences.</title>
        <authorList>
            <person name="Harhay G.P."/>
            <person name="Sonstegard T.S."/>
            <person name="Keele J.W."/>
            <person name="Heaton M.P."/>
            <person name="Clawson M.L."/>
            <person name="Snelling W.M."/>
            <person name="Wiedmann R.T."/>
            <person name="Van Tassell C.P."/>
            <person name="Smith T.P.L."/>
        </authorList>
    </citation>
    <scope>NUCLEOTIDE SEQUENCE [LARGE SCALE MRNA]</scope>
</reference>
<gene>
    <name type="primary">CTH</name>
</gene>
<dbReference type="EC" id="4.4.1.1"/>
<dbReference type="EMBL" id="BT021485">
    <property type="protein sequence ID" value="AAX46332.1"/>
    <property type="molecule type" value="mRNA"/>
</dbReference>
<dbReference type="RefSeq" id="NP_001019738.1">
    <property type="nucleotide sequence ID" value="NM_001024567.1"/>
</dbReference>
<dbReference type="SMR" id="Q58DW2"/>
<dbReference type="FunCoup" id="Q58DW2">
    <property type="interactions" value="789"/>
</dbReference>
<dbReference type="STRING" id="9913.ENSBTAP00000062349"/>
<dbReference type="PaxDb" id="9913-ENSBTAP00000056275"/>
<dbReference type="GeneID" id="539159"/>
<dbReference type="KEGG" id="bta:539159"/>
<dbReference type="CTD" id="1491"/>
<dbReference type="eggNOG" id="KOG0053">
    <property type="taxonomic scope" value="Eukaryota"/>
</dbReference>
<dbReference type="InParanoid" id="Q58DW2"/>
<dbReference type="OrthoDB" id="3512640at2759"/>
<dbReference type="UniPathway" id="UPA00136">
    <property type="reaction ID" value="UER00202"/>
</dbReference>
<dbReference type="Proteomes" id="UP000009136">
    <property type="component" value="Unplaced"/>
</dbReference>
<dbReference type="GO" id="GO:0005737">
    <property type="term" value="C:cytoplasm"/>
    <property type="evidence" value="ECO:0000318"/>
    <property type="project" value="GO_Central"/>
</dbReference>
<dbReference type="GO" id="GO:0005516">
    <property type="term" value="F:calmodulin binding"/>
    <property type="evidence" value="ECO:0007669"/>
    <property type="project" value="UniProtKB-KW"/>
</dbReference>
<dbReference type="GO" id="GO:0004123">
    <property type="term" value="F:cystathionine gamma-lyase activity"/>
    <property type="evidence" value="ECO:0000250"/>
    <property type="project" value="UniProtKB"/>
</dbReference>
<dbReference type="GO" id="GO:0044540">
    <property type="term" value="F:L-cystine L-cysteine-lyase (deaminating)"/>
    <property type="evidence" value="ECO:0000250"/>
    <property type="project" value="UniProtKB"/>
</dbReference>
<dbReference type="GO" id="GO:0030170">
    <property type="term" value="F:pyridoxal phosphate binding"/>
    <property type="evidence" value="ECO:0000250"/>
    <property type="project" value="UniProtKB"/>
</dbReference>
<dbReference type="GO" id="GO:0019344">
    <property type="term" value="P:cysteine biosynthetic process"/>
    <property type="evidence" value="ECO:0000250"/>
    <property type="project" value="UniProtKB"/>
</dbReference>
<dbReference type="GO" id="GO:0019343">
    <property type="term" value="P:cysteine biosynthetic process via cystathionine"/>
    <property type="evidence" value="ECO:0000318"/>
    <property type="project" value="GO_Central"/>
</dbReference>
<dbReference type="GO" id="GO:0070814">
    <property type="term" value="P:hydrogen sulfide biosynthetic process"/>
    <property type="evidence" value="ECO:0000250"/>
    <property type="project" value="UniProtKB"/>
</dbReference>
<dbReference type="GO" id="GO:0006629">
    <property type="term" value="P:lipid metabolic process"/>
    <property type="evidence" value="ECO:0007669"/>
    <property type="project" value="UniProtKB-KW"/>
</dbReference>
<dbReference type="GO" id="GO:0043066">
    <property type="term" value="P:negative regulation of apoptotic process"/>
    <property type="evidence" value="ECO:0000250"/>
    <property type="project" value="UniProtKB"/>
</dbReference>
<dbReference type="GO" id="GO:0043123">
    <property type="term" value="P:positive regulation of canonical NF-kappaB signal transduction"/>
    <property type="evidence" value="ECO:0000250"/>
    <property type="project" value="UniProtKB"/>
</dbReference>
<dbReference type="GO" id="GO:0051092">
    <property type="term" value="P:positive regulation of NF-kappaB transcription factor activity"/>
    <property type="evidence" value="ECO:0000250"/>
    <property type="project" value="UniProtKB"/>
</dbReference>
<dbReference type="GO" id="GO:0044524">
    <property type="term" value="P:protein sulfhydration"/>
    <property type="evidence" value="ECO:0000250"/>
    <property type="project" value="UniProtKB"/>
</dbReference>
<dbReference type="GO" id="GO:0018272">
    <property type="term" value="P:protein-pyridoxal-5-phosphate linkage via peptidyl-N6-pyridoxal phosphate-L-lysine"/>
    <property type="evidence" value="ECO:0000250"/>
    <property type="project" value="UniProtKB"/>
</dbReference>
<dbReference type="GO" id="GO:0019346">
    <property type="term" value="P:transsulfuration"/>
    <property type="evidence" value="ECO:0000318"/>
    <property type="project" value="GO_Central"/>
</dbReference>
<dbReference type="CDD" id="cd00614">
    <property type="entry name" value="CGS_like"/>
    <property type="match status" value="1"/>
</dbReference>
<dbReference type="FunFam" id="3.90.1150.10:FF:000008">
    <property type="entry name" value="Cystathionine gamma-synthase"/>
    <property type="match status" value="1"/>
</dbReference>
<dbReference type="FunFam" id="3.40.640.10:FF:000009">
    <property type="entry name" value="Cystathionine gamma-synthase homolog"/>
    <property type="match status" value="1"/>
</dbReference>
<dbReference type="Gene3D" id="3.90.1150.10">
    <property type="entry name" value="Aspartate Aminotransferase, domain 1"/>
    <property type="match status" value="1"/>
</dbReference>
<dbReference type="Gene3D" id="3.40.640.10">
    <property type="entry name" value="Type I PLP-dependent aspartate aminotransferase-like (Major domain)"/>
    <property type="match status" value="1"/>
</dbReference>
<dbReference type="InterPro" id="IPR000277">
    <property type="entry name" value="Cys/Met-Metab_PyrdxlP-dep_enz"/>
</dbReference>
<dbReference type="InterPro" id="IPR015424">
    <property type="entry name" value="PyrdxlP-dep_Trfase"/>
</dbReference>
<dbReference type="InterPro" id="IPR015421">
    <property type="entry name" value="PyrdxlP-dep_Trfase_major"/>
</dbReference>
<dbReference type="InterPro" id="IPR015422">
    <property type="entry name" value="PyrdxlP-dep_Trfase_small"/>
</dbReference>
<dbReference type="PANTHER" id="PTHR11808:SF15">
    <property type="entry name" value="CYSTATHIONINE GAMMA-LYASE"/>
    <property type="match status" value="1"/>
</dbReference>
<dbReference type="PANTHER" id="PTHR11808">
    <property type="entry name" value="TRANS-SULFURATION ENZYME FAMILY MEMBER"/>
    <property type="match status" value="1"/>
</dbReference>
<dbReference type="Pfam" id="PF01053">
    <property type="entry name" value="Cys_Met_Meta_PP"/>
    <property type="match status" value="1"/>
</dbReference>
<dbReference type="PIRSF" id="PIRSF001434">
    <property type="entry name" value="CGS"/>
    <property type="match status" value="1"/>
</dbReference>
<dbReference type="SUPFAM" id="SSF53383">
    <property type="entry name" value="PLP-dependent transferases"/>
    <property type="match status" value="1"/>
</dbReference>
<name>CGL_BOVIN</name>
<comment type="function">
    <text evidence="1">Catalyzes the last step in the trans-sulfuration pathway from methionine to cysteine. Has broad substrate specificity. Converts cystathionine to cysteine, ammonia and 2-oxobutanoate. Converts two cysteine molecules to lanthionine and hydrogen sulfide. Can also accept homocysteine as substrate. Specificity depends on the levels of the endogenous substrates. Generates the endogenous signaling molecule hydrogen sulfide (H2S), and so contributes to the regulation of blood pressure. Acts as a cysteine-protein sulfhydrase by mediating sulfhydration of target proteins: sulfhydration consists of converting -SH groups into -SSH on specific cysteine residues of target proteins such as GAPDH, PTPN1 and NF-kappa-B subunit RELA, thereby regulating their function (By similarity).</text>
</comment>
<comment type="catalytic activity">
    <reaction>
        <text>L,L-cystathionine + H2O = 2-oxobutanoate + L-cysteine + NH4(+)</text>
        <dbReference type="Rhea" id="RHEA:14005"/>
        <dbReference type="ChEBI" id="CHEBI:15377"/>
        <dbReference type="ChEBI" id="CHEBI:16763"/>
        <dbReference type="ChEBI" id="CHEBI:28938"/>
        <dbReference type="ChEBI" id="CHEBI:35235"/>
        <dbReference type="ChEBI" id="CHEBI:58161"/>
        <dbReference type="EC" id="4.4.1.1"/>
    </reaction>
</comment>
<comment type="cofactor">
    <cofactor evidence="1">
        <name>pyridoxal 5'-phosphate</name>
        <dbReference type="ChEBI" id="CHEBI:597326"/>
    </cofactor>
</comment>
<comment type="pathway">
    <text>Amino-acid biosynthesis; L-cysteine biosynthesis; L-cysteine from L-homocysteine and L-serine: step 2/2.</text>
</comment>
<comment type="subunit">
    <text evidence="1">Homotetramer. Interacts with CALM in a calcium-dependent manner (By similarity).</text>
</comment>
<comment type="subcellular location">
    <subcellularLocation>
        <location evidence="1">Cytoplasm</location>
    </subcellularLocation>
</comment>
<comment type="similarity">
    <text evidence="2">Belongs to the trans-sulfuration enzymes family.</text>
</comment>
<feature type="chain" id="PRO_0000245576" description="Cystathionine gamma-lyase">
    <location>
        <begin position="1"/>
        <end position="405"/>
    </location>
</feature>
<feature type="binding site" evidence="1">
    <location>
        <position position="62"/>
    </location>
    <ligand>
        <name>substrate</name>
    </ligand>
</feature>
<feature type="binding site" evidence="1">
    <location>
        <position position="114"/>
    </location>
    <ligand>
        <name>substrate</name>
    </ligand>
</feature>
<feature type="binding site" evidence="1">
    <location>
        <position position="119"/>
    </location>
    <ligand>
        <name>substrate</name>
    </ligand>
</feature>
<feature type="binding site" evidence="1">
    <location>
        <position position="339"/>
    </location>
    <ligand>
        <name>substrate</name>
    </ligand>
</feature>
<feature type="modified residue" description="N6-(pyridoxal phosphate)lysine" evidence="1">
    <location>
        <position position="212"/>
    </location>
</feature>
<accession>Q58DW2</accession>
<keyword id="KW-0028">Amino-acid biosynthesis</keyword>
<keyword id="KW-0112">Calmodulin-binding</keyword>
<keyword id="KW-0198">Cysteine biosynthesis</keyword>
<keyword id="KW-0963">Cytoplasm</keyword>
<keyword id="KW-0443">Lipid metabolism</keyword>
<keyword id="KW-0456">Lyase</keyword>
<keyword id="KW-0663">Pyridoxal phosphate</keyword>
<keyword id="KW-1185">Reference proteome</keyword>
<organism>
    <name type="scientific">Bos taurus</name>
    <name type="common">Bovine</name>
    <dbReference type="NCBI Taxonomy" id="9913"/>
    <lineage>
        <taxon>Eukaryota</taxon>
        <taxon>Metazoa</taxon>
        <taxon>Chordata</taxon>
        <taxon>Craniata</taxon>
        <taxon>Vertebrata</taxon>
        <taxon>Euteleostomi</taxon>
        <taxon>Mammalia</taxon>
        <taxon>Eutheria</taxon>
        <taxon>Laurasiatheria</taxon>
        <taxon>Artiodactyla</taxon>
        <taxon>Ruminantia</taxon>
        <taxon>Pecora</taxon>
        <taxon>Bovidae</taxon>
        <taxon>Bovinae</taxon>
        <taxon>Bos</taxon>
    </lineage>
</organism>
<proteinExistence type="evidence at transcript level"/>
<evidence type="ECO:0000250" key="1"/>
<evidence type="ECO:0000305" key="2"/>
<protein>
    <recommendedName>
        <fullName>Cystathionine gamma-lyase</fullName>
        <ecNumber>4.4.1.1</ecNumber>
    </recommendedName>
    <alternativeName>
        <fullName>Cysteine-protein sulfhydrase</fullName>
    </alternativeName>
    <alternativeName>
        <fullName>Gamma-cystathionase</fullName>
    </alternativeName>
</protein>